<protein>
    <recommendedName>
        <fullName evidence="1">Small ribosomal subunit protein uS11</fullName>
    </recommendedName>
    <alternativeName>
        <fullName evidence="2">30S ribosomal protein S11</fullName>
    </alternativeName>
</protein>
<name>RS11_NITHX</name>
<organism>
    <name type="scientific">Nitrobacter hamburgensis (strain DSM 10229 / NCIMB 13809 / X14)</name>
    <dbReference type="NCBI Taxonomy" id="323097"/>
    <lineage>
        <taxon>Bacteria</taxon>
        <taxon>Pseudomonadati</taxon>
        <taxon>Pseudomonadota</taxon>
        <taxon>Alphaproteobacteria</taxon>
        <taxon>Hyphomicrobiales</taxon>
        <taxon>Nitrobacteraceae</taxon>
        <taxon>Nitrobacter</taxon>
    </lineage>
</organism>
<keyword id="KW-1185">Reference proteome</keyword>
<keyword id="KW-0687">Ribonucleoprotein</keyword>
<keyword id="KW-0689">Ribosomal protein</keyword>
<keyword id="KW-0694">RNA-binding</keyword>
<keyword id="KW-0699">rRNA-binding</keyword>
<accession>Q1QN07</accession>
<reference key="1">
    <citation type="submission" date="2006-03" db="EMBL/GenBank/DDBJ databases">
        <title>Complete sequence of chromosome of Nitrobacter hamburgensis X14.</title>
        <authorList>
            <consortium name="US DOE Joint Genome Institute"/>
            <person name="Copeland A."/>
            <person name="Lucas S."/>
            <person name="Lapidus A."/>
            <person name="Barry K."/>
            <person name="Detter J.C."/>
            <person name="Glavina del Rio T."/>
            <person name="Hammon N."/>
            <person name="Israni S."/>
            <person name="Dalin E."/>
            <person name="Tice H."/>
            <person name="Pitluck S."/>
            <person name="Chain P."/>
            <person name="Malfatti S."/>
            <person name="Shin M."/>
            <person name="Vergez L."/>
            <person name="Schmutz J."/>
            <person name="Larimer F."/>
            <person name="Land M."/>
            <person name="Hauser L."/>
            <person name="Kyrpides N."/>
            <person name="Ivanova N."/>
            <person name="Ward B."/>
            <person name="Arp D."/>
            <person name="Klotz M."/>
            <person name="Stein L."/>
            <person name="O'Mullan G."/>
            <person name="Starkenburg S."/>
            <person name="Sayavedra L."/>
            <person name="Poret-Peterson A.T."/>
            <person name="Gentry M.E."/>
            <person name="Bruce D."/>
            <person name="Richardson P."/>
        </authorList>
    </citation>
    <scope>NUCLEOTIDE SEQUENCE [LARGE SCALE GENOMIC DNA]</scope>
    <source>
        <strain>DSM 10229 / NCIMB 13809 / X14</strain>
    </source>
</reference>
<feature type="chain" id="PRO_0000294810" description="Small ribosomal subunit protein uS11">
    <location>
        <begin position="1"/>
        <end position="130"/>
    </location>
</feature>
<comment type="function">
    <text evidence="1">Located on the platform of the 30S subunit, it bridges several disparate RNA helices of the 16S rRNA. Forms part of the Shine-Dalgarno cleft in the 70S ribosome.</text>
</comment>
<comment type="subunit">
    <text evidence="1">Part of the 30S ribosomal subunit. Interacts with proteins S7 and S18. Binds to IF-3.</text>
</comment>
<comment type="similarity">
    <text evidence="1">Belongs to the universal ribosomal protein uS11 family.</text>
</comment>
<proteinExistence type="inferred from homology"/>
<dbReference type="EMBL" id="CP000319">
    <property type="protein sequence ID" value="ABE62390.1"/>
    <property type="molecule type" value="Genomic_DNA"/>
</dbReference>
<dbReference type="RefSeq" id="WP_011510076.1">
    <property type="nucleotide sequence ID" value="NC_007964.1"/>
</dbReference>
<dbReference type="SMR" id="Q1QN07"/>
<dbReference type="STRING" id="323097.Nham_1568"/>
<dbReference type="KEGG" id="nha:Nham_1568"/>
<dbReference type="eggNOG" id="COG0100">
    <property type="taxonomic scope" value="Bacteria"/>
</dbReference>
<dbReference type="HOGENOM" id="CLU_072439_5_0_5"/>
<dbReference type="OrthoDB" id="9806415at2"/>
<dbReference type="Proteomes" id="UP000001953">
    <property type="component" value="Chromosome"/>
</dbReference>
<dbReference type="GO" id="GO:1990904">
    <property type="term" value="C:ribonucleoprotein complex"/>
    <property type="evidence" value="ECO:0007669"/>
    <property type="project" value="UniProtKB-KW"/>
</dbReference>
<dbReference type="GO" id="GO:0005840">
    <property type="term" value="C:ribosome"/>
    <property type="evidence" value="ECO:0007669"/>
    <property type="project" value="UniProtKB-KW"/>
</dbReference>
<dbReference type="GO" id="GO:0019843">
    <property type="term" value="F:rRNA binding"/>
    <property type="evidence" value="ECO:0007669"/>
    <property type="project" value="UniProtKB-UniRule"/>
</dbReference>
<dbReference type="GO" id="GO:0003735">
    <property type="term" value="F:structural constituent of ribosome"/>
    <property type="evidence" value="ECO:0007669"/>
    <property type="project" value="InterPro"/>
</dbReference>
<dbReference type="GO" id="GO:0006412">
    <property type="term" value="P:translation"/>
    <property type="evidence" value="ECO:0007669"/>
    <property type="project" value="UniProtKB-UniRule"/>
</dbReference>
<dbReference type="FunFam" id="3.30.420.80:FF:000001">
    <property type="entry name" value="30S ribosomal protein S11"/>
    <property type="match status" value="1"/>
</dbReference>
<dbReference type="Gene3D" id="3.30.420.80">
    <property type="entry name" value="Ribosomal protein S11"/>
    <property type="match status" value="1"/>
</dbReference>
<dbReference type="HAMAP" id="MF_01310">
    <property type="entry name" value="Ribosomal_uS11"/>
    <property type="match status" value="1"/>
</dbReference>
<dbReference type="InterPro" id="IPR001971">
    <property type="entry name" value="Ribosomal_uS11"/>
</dbReference>
<dbReference type="InterPro" id="IPR019981">
    <property type="entry name" value="Ribosomal_uS11_bac-type"/>
</dbReference>
<dbReference type="InterPro" id="IPR036967">
    <property type="entry name" value="Ribosomal_uS11_sf"/>
</dbReference>
<dbReference type="NCBIfam" id="NF003698">
    <property type="entry name" value="PRK05309.1"/>
    <property type="match status" value="1"/>
</dbReference>
<dbReference type="NCBIfam" id="TIGR03632">
    <property type="entry name" value="uS11_bact"/>
    <property type="match status" value="1"/>
</dbReference>
<dbReference type="PANTHER" id="PTHR11759">
    <property type="entry name" value="40S RIBOSOMAL PROTEIN S14/30S RIBOSOMAL PROTEIN S11"/>
    <property type="match status" value="1"/>
</dbReference>
<dbReference type="Pfam" id="PF00411">
    <property type="entry name" value="Ribosomal_S11"/>
    <property type="match status" value="1"/>
</dbReference>
<dbReference type="PIRSF" id="PIRSF002131">
    <property type="entry name" value="Ribosomal_S11"/>
    <property type="match status" value="1"/>
</dbReference>
<dbReference type="SUPFAM" id="SSF53137">
    <property type="entry name" value="Translational machinery components"/>
    <property type="match status" value="1"/>
</dbReference>
<gene>
    <name evidence="1" type="primary">rpsK</name>
    <name type="ordered locus">Nham_1568</name>
</gene>
<sequence>MGKEAATRVRRRERKNIASGVAHVNSSFNNTTITITDAQGNTIAWSSAGTMGFKGSRKSTPYAAQVAAEDVSKKAQEHGMRTLEVEVAGPGSGRESALRALQAAGFTVTSIRDVTAIPHNGCRPRKRRRV</sequence>
<evidence type="ECO:0000255" key="1">
    <source>
        <dbReference type="HAMAP-Rule" id="MF_01310"/>
    </source>
</evidence>
<evidence type="ECO:0000305" key="2"/>